<organism>
    <name type="scientific">Escherichia coli O139:H28 (strain E24377A / ETEC)</name>
    <dbReference type="NCBI Taxonomy" id="331111"/>
    <lineage>
        <taxon>Bacteria</taxon>
        <taxon>Pseudomonadati</taxon>
        <taxon>Pseudomonadota</taxon>
        <taxon>Gammaproteobacteria</taxon>
        <taxon>Enterobacterales</taxon>
        <taxon>Enterobacteriaceae</taxon>
        <taxon>Escherichia</taxon>
    </lineage>
</organism>
<sequence>MAKEDNIEMQGTVLETLPNTMFRVELENGHVVTAHISGKMRKNYIRILTGDKVTVELTPYDLSKGRIVFRSR</sequence>
<dbReference type="EMBL" id="CP000800">
    <property type="protein sequence ID" value="ABV20310.1"/>
    <property type="molecule type" value="Genomic_DNA"/>
</dbReference>
<dbReference type="RefSeq" id="WP_001040187.1">
    <property type="nucleotide sequence ID" value="NC_009801.1"/>
</dbReference>
<dbReference type="SMR" id="A7ZJV1"/>
<dbReference type="GeneID" id="93776536"/>
<dbReference type="KEGG" id="ecw:EcE24377A_0957"/>
<dbReference type="HOGENOM" id="CLU_151267_1_0_6"/>
<dbReference type="Proteomes" id="UP000001122">
    <property type="component" value="Chromosome"/>
</dbReference>
<dbReference type="GO" id="GO:0005829">
    <property type="term" value="C:cytosol"/>
    <property type="evidence" value="ECO:0007669"/>
    <property type="project" value="TreeGrafter"/>
</dbReference>
<dbReference type="GO" id="GO:0043022">
    <property type="term" value="F:ribosome binding"/>
    <property type="evidence" value="ECO:0007669"/>
    <property type="project" value="UniProtKB-UniRule"/>
</dbReference>
<dbReference type="GO" id="GO:0019843">
    <property type="term" value="F:rRNA binding"/>
    <property type="evidence" value="ECO:0007669"/>
    <property type="project" value="UniProtKB-UniRule"/>
</dbReference>
<dbReference type="GO" id="GO:0003743">
    <property type="term" value="F:translation initiation factor activity"/>
    <property type="evidence" value="ECO:0007669"/>
    <property type="project" value="UniProtKB-UniRule"/>
</dbReference>
<dbReference type="CDD" id="cd04451">
    <property type="entry name" value="S1_IF1"/>
    <property type="match status" value="1"/>
</dbReference>
<dbReference type="FunFam" id="2.40.50.140:FF:000002">
    <property type="entry name" value="Translation initiation factor IF-1"/>
    <property type="match status" value="1"/>
</dbReference>
<dbReference type="Gene3D" id="2.40.50.140">
    <property type="entry name" value="Nucleic acid-binding proteins"/>
    <property type="match status" value="1"/>
</dbReference>
<dbReference type="HAMAP" id="MF_00075">
    <property type="entry name" value="IF_1"/>
    <property type="match status" value="1"/>
</dbReference>
<dbReference type="InterPro" id="IPR012340">
    <property type="entry name" value="NA-bd_OB-fold"/>
</dbReference>
<dbReference type="InterPro" id="IPR006196">
    <property type="entry name" value="RNA-binding_domain_S1_IF1"/>
</dbReference>
<dbReference type="InterPro" id="IPR003029">
    <property type="entry name" value="S1_domain"/>
</dbReference>
<dbReference type="InterPro" id="IPR004368">
    <property type="entry name" value="TIF_IF1"/>
</dbReference>
<dbReference type="NCBIfam" id="TIGR00008">
    <property type="entry name" value="infA"/>
    <property type="match status" value="1"/>
</dbReference>
<dbReference type="PANTHER" id="PTHR33370">
    <property type="entry name" value="TRANSLATION INITIATION FACTOR IF-1, CHLOROPLASTIC"/>
    <property type="match status" value="1"/>
</dbReference>
<dbReference type="PANTHER" id="PTHR33370:SF1">
    <property type="entry name" value="TRANSLATION INITIATION FACTOR IF-1, CHLOROPLASTIC"/>
    <property type="match status" value="1"/>
</dbReference>
<dbReference type="Pfam" id="PF01176">
    <property type="entry name" value="eIF-1a"/>
    <property type="match status" value="1"/>
</dbReference>
<dbReference type="SMART" id="SM00316">
    <property type="entry name" value="S1"/>
    <property type="match status" value="1"/>
</dbReference>
<dbReference type="SUPFAM" id="SSF50249">
    <property type="entry name" value="Nucleic acid-binding proteins"/>
    <property type="match status" value="1"/>
</dbReference>
<dbReference type="PROSITE" id="PS50832">
    <property type="entry name" value="S1_IF1_TYPE"/>
    <property type="match status" value="1"/>
</dbReference>
<feature type="chain" id="PRO_0000338822" description="Translation initiation factor IF-1">
    <location>
        <begin position="1"/>
        <end position="72"/>
    </location>
</feature>
<feature type="domain" description="S1-like" evidence="1">
    <location>
        <begin position="1"/>
        <end position="72"/>
    </location>
</feature>
<keyword id="KW-0963">Cytoplasm</keyword>
<keyword id="KW-0396">Initiation factor</keyword>
<keyword id="KW-0648">Protein biosynthesis</keyword>
<keyword id="KW-1185">Reference proteome</keyword>
<keyword id="KW-0694">RNA-binding</keyword>
<keyword id="KW-0699">rRNA-binding</keyword>
<reference key="1">
    <citation type="journal article" date="2008" name="J. Bacteriol.">
        <title>The pangenome structure of Escherichia coli: comparative genomic analysis of E. coli commensal and pathogenic isolates.</title>
        <authorList>
            <person name="Rasko D.A."/>
            <person name="Rosovitz M.J."/>
            <person name="Myers G.S.A."/>
            <person name="Mongodin E.F."/>
            <person name="Fricke W.F."/>
            <person name="Gajer P."/>
            <person name="Crabtree J."/>
            <person name="Sebaihia M."/>
            <person name="Thomson N.R."/>
            <person name="Chaudhuri R."/>
            <person name="Henderson I.R."/>
            <person name="Sperandio V."/>
            <person name="Ravel J."/>
        </authorList>
    </citation>
    <scope>NUCLEOTIDE SEQUENCE [LARGE SCALE GENOMIC DNA]</scope>
    <source>
        <strain>E24377A / ETEC</strain>
    </source>
</reference>
<comment type="function">
    <text evidence="1">One of the essential components for the initiation of protein synthesis. Stabilizes the binding of IF-2 and IF-3 on the 30S subunit to which N-formylmethionyl-tRNA(fMet) subsequently binds. Helps modulate mRNA selection, yielding the 30S pre-initiation complex (PIC). Upon addition of the 50S ribosomal subunit IF-1, IF-2 and IF-3 are released leaving the mature 70S translation initiation complex.</text>
</comment>
<comment type="subunit">
    <text evidence="1">Component of the 30S ribosomal translation pre-initiation complex which assembles on the 30S ribosome in the order IF-2 and IF-3, IF-1 and N-formylmethionyl-tRNA(fMet); mRNA recruitment can occur at any time during PIC assembly.</text>
</comment>
<comment type="subcellular location">
    <subcellularLocation>
        <location evidence="1">Cytoplasm</location>
    </subcellularLocation>
</comment>
<comment type="similarity">
    <text evidence="1">Belongs to the IF-1 family.</text>
</comment>
<accession>A7ZJV1</accession>
<gene>
    <name evidence="1" type="primary">infA</name>
    <name type="ordered locus">EcE24377A_0957</name>
</gene>
<evidence type="ECO:0000255" key="1">
    <source>
        <dbReference type="HAMAP-Rule" id="MF_00075"/>
    </source>
</evidence>
<protein>
    <recommendedName>
        <fullName evidence="1">Translation initiation factor IF-1</fullName>
    </recommendedName>
</protein>
<name>IF1_ECO24</name>
<proteinExistence type="inferred from homology"/>